<organism>
    <name type="scientific">Bacteroides fragilis (strain ATCC 25285 / DSM 2151 / CCUG 4856 / JCM 11019 / LMG 10263 / NCTC 9343 / Onslow / VPI 2553 / EN-2)</name>
    <dbReference type="NCBI Taxonomy" id="272559"/>
    <lineage>
        <taxon>Bacteria</taxon>
        <taxon>Pseudomonadati</taxon>
        <taxon>Bacteroidota</taxon>
        <taxon>Bacteroidia</taxon>
        <taxon>Bacteroidales</taxon>
        <taxon>Bacteroidaceae</taxon>
        <taxon>Bacteroides</taxon>
    </lineage>
</organism>
<dbReference type="EC" id="3.1.26.4" evidence="1"/>
<dbReference type="EMBL" id="CR626927">
    <property type="protein sequence ID" value="CAH06014.1"/>
    <property type="molecule type" value="Genomic_DNA"/>
</dbReference>
<dbReference type="RefSeq" id="WP_005783970.1">
    <property type="nucleotide sequence ID" value="NZ_UFTH01000001.1"/>
</dbReference>
<dbReference type="SMR" id="Q5LIL2"/>
<dbReference type="PaxDb" id="272559-BF9343_0235"/>
<dbReference type="KEGG" id="bfs:BF9343_0235"/>
<dbReference type="eggNOG" id="COG0164">
    <property type="taxonomic scope" value="Bacteria"/>
</dbReference>
<dbReference type="HOGENOM" id="CLU_036532_3_1_10"/>
<dbReference type="Proteomes" id="UP000006731">
    <property type="component" value="Chromosome"/>
</dbReference>
<dbReference type="GO" id="GO:0005737">
    <property type="term" value="C:cytoplasm"/>
    <property type="evidence" value="ECO:0007669"/>
    <property type="project" value="UniProtKB-SubCell"/>
</dbReference>
<dbReference type="GO" id="GO:0032299">
    <property type="term" value="C:ribonuclease H2 complex"/>
    <property type="evidence" value="ECO:0007669"/>
    <property type="project" value="TreeGrafter"/>
</dbReference>
<dbReference type="GO" id="GO:0030145">
    <property type="term" value="F:manganese ion binding"/>
    <property type="evidence" value="ECO:0007669"/>
    <property type="project" value="UniProtKB-UniRule"/>
</dbReference>
<dbReference type="GO" id="GO:0003723">
    <property type="term" value="F:RNA binding"/>
    <property type="evidence" value="ECO:0007669"/>
    <property type="project" value="InterPro"/>
</dbReference>
<dbReference type="GO" id="GO:0004523">
    <property type="term" value="F:RNA-DNA hybrid ribonuclease activity"/>
    <property type="evidence" value="ECO:0007669"/>
    <property type="project" value="UniProtKB-UniRule"/>
</dbReference>
<dbReference type="GO" id="GO:0043137">
    <property type="term" value="P:DNA replication, removal of RNA primer"/>
    <property type="evidence" value="ECO:0007669"/>
    <property type="project" value="TreeGrafter"/>
</dbReference>
<dbReference type="GO" id="GO:0006298">
    <property type="term" value="P:mismatch repair"/>
    <property type="evidence" value="ECO:0007669"/>
    <property type="project" value="TreeGrafter"/>
</dbReference>
<dbReference type="CDD" id="cd07182">
    <property type="entry name" value="RNase_HII_bacteria_HII_like"/>
    <property type="match status" value="1"/>
</dbReference>
<dbReference type="FunFam" id="3.30.420.10:FF:000078">
    <property type="entry name" value="Ribonuclease HII"/>
    <property type="match status" value="1"/>
</dbReference>
<dbReference type="Gene3D" id="3.30.420.10">
    <property type="entry name" value="Ribonuclease H-like superfamily/Ribonuclease H"/>
    <property type="match status" value="1"/>
</dbReference>
<dbReference type="HAMAP" id="MF_00052_B">
    <property type="entry name" value="RNase_HII_B"/>
    <property type="match status" value="1"/>
</dbReference>
<dbReference type="InterPro" id="IPR022898">
    <property type="entry name" value="RNase_HII"/>
</dbReference>
<dbReference type="InterPro" id="IPR001352">
    <property type="entry name" value="RNase_HII/HIII"/>
</dbReference>
<dbReference type="InterPro" id="IPR024567">
    <property type="entry name" value="RNase_HII/HIII_dom"/>
</dbReference>
<dbReference type="InterPro" id="IPR012337">
    <property type="entry name" value="RNaseH-like_sf"/>
</dbReference>
<dbReference type="InterPro" id="IPR036397">
    <property type="entry name" value="RNaseH_sf"/>
</dbReference>
<dbReference type="NCBIfam" id="NF000595">
    <property type="entry name" value="PRK00015.1-3"/>
    <property type="match status" value="1"/>
</dbReference>
<dbReference type="PANTHER" id="PTHR10954">
    <property type="entry name" value="RIBONUCLEASE H2 SUBUNIT A"/>
    <property type="match status" value="1"/>
</dbReference>
<dbReference type="PANTHER" id="PTHR10954:SF18">
    <property type="entry name" value="RIBONUCLEASE HII"/>
    <property type="match status" value="1"/>
</dbReference>
<dbReference type="Pfam" id="PF01351">
    <property type="entry name" value="RNase_HII"/>
    <property type="match status" value="1"/>
</dbReference>
<dbReference type="SUPFAM" id="SSF53098">
    <property type="entry name" value="Ribonuclease H-like"/>
    <property type="match status" value="1"/>
</dbReference>
<dbReference type="PROSITE" id="PS51975">
    <property type="entry name" value="RNASE_H_2"/>
    <property type="match status" value="1"/>
</dbReference>
<proteinExistence type="inferred from homology"/>
<sequence>MLLPWLNEELIEAGCDEAGRGCLAGAVYAAAVILPKDFENELLNDSKQLSEKQRYALREVIERDAVAWAVGIVSPEEIDKINILNASFLAMHRAVDRLKTRPQHLLIDGNRFKKYPDIPHTTVIKGDGKYLSIAAASILAKTYRDDYMNKLHQEFPCYDWEHNKGYPTKKHRAAIAGHGTTPYHRMTFNLLGDGQLELFSK</sequence>
<name>RNH2_BACFN</name>
<accession>Q5LIL2</accession>
<comment type="function">
    <text evidence="1">Endonuclease that specifically degrades the RNA of RNA-DNA hybrids.</text>
</comment>
<comment type="catalytic activity">
    <reaction evidence="1">
        <text>Endonucleolytic cleavage to 5'-phosphomonoester.</text>
        <dbReference type="EC" id="3.1.26.4"/>
    </reaction>
</comment>
<comment type="cofactor">
    <cofactor evidence="1">
        <name>Mn(2+)</name>
        <dbReference type="ChEBI" id="CHEBI:29035"/>
    </cofactor>
    <cofactor evidence="1">
        <name>Mg(2+)</name>
        <dbReference type="ChEBI" id="CHEBI:18420"/>
    </cofactor>
    <text evidence="1">Manganese or magnesium. Binds 1 divalent metal ion per monomer in the absence of substrate. May bind a second metal ion after substrate binding.</text>
</comment>
<comment type="subcellular location">
    <subcellularLocation>
        <location evidence="1">Cytoplasm</location>
    </subcellularLocation>
</comment>
<comment type="similarity">
    <text evidence="1">Belongs to the RNase HII family.</text>
</comment>
<evidence type="ECO:0000255" key="1">
    <source>
        <dbReference type="HAMAP-Rule" id="MF_00052"/>
    </source>
</evidence>
<evidence type="ECO:0000255" key="2">
    <source>
        <dbReference type="PROSITE-ProRule" id="PRU01319"/>
    </source>
</evidence>
<keyword id="KW-0963">Cytoplasm</keyword>
<keyword id="KW-0255">Endonuclease</keyword>
<keyword id="KW-0378">Hydrolase</keyword>
<keyword id="KW-0464">Manganese</keyword>
<keyword id="KW-0479">Metal-binding</keyword>
<keyword id="KW-0540">Nuclease</keyword>
<reference key="1">
    <citation type="journal article" date="2005" name="Science">
        <title>Extensive DNA inversions in the B. fragilis genome control variable gene expression.</title>
        <authorList>
            <person name="Cerdeno-Tarraga A.-M."/>
            <person name="Patrick S."/>
            <person name="Crossman L.C."/>
            <person name="Blakely G."/>
            <person name="Abratt V."/>
            <person name="Lennard N."/>
            <person name="Poxton I."/>
            <person name="Duerden B."/>
            <person name="Harris B."/>
            <person name="Quail M.A."/>
            <person name="Barron A."/>
            <person name="Clark L."/>
            <person name="Corton C."/>
            <person name="Doggett J."/>
            <person name="Holden M.T.G."/>
            <person name="Larke N."/>
            <person name="Line A."/>
            <person name="Lord A."/>
            <person name="Norbertczak H."/>
            <person name="Ormond D."/>
            <person name="Price C."/>
            <person name="Rabbinowitsch E."/>
            <person name="Woodward J."/>
            <person name="Barrell B.G."/>
            <person name="Parkhill J."/>
        </authorList>
    </citation>
    <scope>NUCLEOTIDE SEQUENCE [LARGE SCALE GENOMIC DNA]</scope>
    <source>
        <strain>ATCC 25285 / DSM 2151 / CCUG 4856 / JCM 11019 / LMG 10263 / NCTC 9343 / Onslow / VPI 2553 / EN-2</strain>
    </source>
</reference>
<feature type="chain" id="PRO_0000235698" description="Ribonuclease HII">
    <location>
        <begin position="1"/>
        <end position="201"/>
    </location>
</feature>
<feature type="domain" description="RNase H type-2" evidence="2">
    <location>
        <begin position="10"/>
        <end position="200"/>
    </location>
</feature>
<feature type="binding site" evidence="1">
    <location>
        <position position="16"/>
    </location>
    <ligand>
        <name>a divalent metal cation</name>
        <dbReference type="ChEBI" id="CHEBI:60240"/>
    </ligand>
</feature>
<feature type="binding site" evidence="1">
    <location>
        <position position="17"/>
    </location>
    <ligand>
        <name>a divalent metal cation</name>
        <dbReference type="ChEBI" id="CHEBI:60240"/>
    </ligand>
</feature>
<feature type="binding site" evidence="1">
    <location>
        <position position="108"/>
    </location>
    <ligand>
        <name>a divalent metal cation</name>
        <dbReference type="ChEBI" id="CHEBI:60240"/>
    </ligand>
</feature>
<gene>
    <name evidence="1" type="primary">rnhB</name>
    <name type="ordered locus">BF0239</name>
</gene>
<protein>
    <recommendedName>
        <fullName evidence="1">Ribonuclease HII</fullName>
        <shortName evidence="1">RNase HII</shortName>
        <ecNumber evidence="1">3.1.26.4</ecNumber>
    </recommendedName>
</protein>